<keyword id="KW-0002">3D-structure</keyword>
<keyword id="KW-0004">4Fe-4S</keyword>
<keyword id="KW-0012">Acyltransferase</keyword>
<keyword id="KW-0963">Cytoplasm</keyword>
<keyword id="KW-0408">Iron</keyword>
<keyword id="KW-0411">Iron-sulfur</keyword>
<keyword id="KW-1017">Isopeptide bond</keyword>
<keyword id="KW-0479">Metal-binding</keyword>
<keyword id="KW-0539">Nucleus</keyword>
<keyword id="KW-1185">Reference proteome</keyword>
<keyword id="KW-0677">Repeat</keyword>
<keyword id="KW-0694">RNA-binding</keyword>
<keyword id="KW-0949">S-adenosyl-L-methionine</keyword>
<keyword id="KW-0808">Transferase</keyword>
<keyword id="KW-0819">tRNA processing</keyword>
<keyword id="KW-0820">tRNA-binding</keyword>
<keyword id="KW-0832">Ubl conjugation</keyword>
<feature type="chain" id="PRO_0000235811" description="Elongator complex protein 3">
    <location>
        <begin position="1"/>
        <end position="557"/>
    </location>
</feature>
<feature type="domain" description="Radical SAM core" evidence="4">
    <location>
        <begin position="91"/>
        <end position="381"/>
    </location>
</feature>
<feature type="domain" description="N-acetyltransferase" evidence="3">
    <location>
        <begin position="405"/>
        <end position="557"/>
    </location>
</feature>
<feature type="binding site" evidence="18 29 36">
    <location>
        <position position="108"/>
    </location>
    <ligand>
        <name>[4Fe-4S] cluster</name>
        <dbReference type="ChEBI" id="CHEBI:49883"/>
        <note>4Fe-4S-S-AdoMet</note>
    </ligand>
</feature>
<feature type="binding site" evidence="18 29 36">
    <location>
        <position position="118"/>
    </location>
    <ligand>
        <name>[4Fe-4S] cluster</name>
        <dbReference type="ChEBI" id="CHEBI:49883"/>
        <note>4Fe-4S-S-AdoMet</note>
    </ligand>
</feature>
<feature type="binding site" evidence="18 29 36">
    <location>
        <position position="121"/>
    </location>
    <ligand>
        <name>[4Fe-4S] cluster</name>
        <dbReference type="ChEBI" id="CHEBI:49883"/>
        <note>4Fe-4S-S-AdoMet</note>
    </ligand>
</feature>
<feature type="binding site" evidence="1">
    <location>
        <position position="173"/>
    </location>
    <ligand>
        <name>acetyl-CoA</name>
        <dbReference type="ChEBI" id="CHEBI:57288"/>
    </ligand>
</feature>
<feature type="binding site" evidence="1">
    <location>
        <begin position="485"/>
        <end position="488"/>
    </location>
    <ligand>
        <name>acetyl-CoA</name>
        <dbReference type="ChEBI" id="CHEBI:57288"/>
    </ligand>
</feature>
<feature type="binding site" evidence="1">
    <location>
        <begin position="508"/>
        <end position="510"/>
    </location>
    <ligand>
        <name>acetyl-CoA</name>
        <dbReference type="ChEBI" id="CHEBI:57288"/>
    </ligand>
</feature>
<feature type="binding site" evidence="1">
    <location>
        <position position="541"/>
    </location>
    <ligand>
        <name>acetyl-CoA</name>
        <dbReference type="ChEBI" id="CHEBI:57288"/>
    </ligand>
</feature>
<feature type="cross-link" description="Glycyl lysine isopeptide (Lys-Gly) (interchain with G-Cter in ubiquitin)" evidence="11">
    <location>
        <position position="453"/>
    </location>
</feature>
<feature type="mutagenesis site" description="Does not affect tRNA modification." evidence="25">
    <original>K</original>
    <variation>A</variation>
    <location>
        <position position="53"/>
    </location>
</feature>
<feature type="mutagenesis site" description="Does not affect tRNA modification." evidence="25">
    <original>K</original>
    <variation>A</variation>
    <location>
        <position position="56"/>
    </location>
</feature>
<feature type="mutagenesis site" description="Does not affect tRNA modification." evidence="25">
    <original>K</original>
    <variation>A</variation>
    <location>
        <position position="57"/>
    </location>
</feature>
<feature type="mutagenesis site" description="Does not affect tRNA modification." evidence="25">
    <original>K</original>
    <variation>A</variation>
    <location>
        <position position="59"/>
    </location>
</feature>
<feature type="mutagenesis site" description="Does not affect tRNA modification." evidence="25">
    <original>K</original>
    <variation>A</variation>
    <location>
        <position position="61"/>
    </location>
</feature>
<feature type="mutagenesis site" description="Does not affect tRNA modification." evidence="25">
    <original>R</original>
    <variation>A</variation>
    <location>
        <position position="65"/>
    </location>
</feature>
<feature type="mutagenesis site" description="Does not affect tRNA modification." evidence="25">
    <original>K</original>
    <variation>A</variation>
    <location>
        <position position="78"/>
    </location>
</feature>
<feature type="mutagenesis site" description="Does not affect tRNA modification." evidence="25">
    <original>K</original>
    <variation>A</variation>
    <location>
        <position position="79"/>
    </location>
</feature>
<feature type="mutagenesis site" description="Decreased tRNA modification." evidence="25">
    <original>KAK</original>
    <variation>AAA</variation>
    <location>
        <begin position="86"/>
        <end position="88"/>
    </location>
</feature>
<feature type="mutagenesis site" description="Decreased tRNA modification." evidence="25">
    <original>R</original>
    <variation>A</variation>
    <location>
        <position position="91"/>
    </location>
</feature>
<feature type="mutagenesis site" description="Impaired tRNA wobble uridine modification." evidence="22 23">
    <original>C</original>
    <variation>A</variation>
    <location>
        <position position="103"/>
    </location>
</feature>
<feature type="mutagenesis site" description="Dissociation of the elongator complex following assembly. Abolished interaction with KTI11 and KTI12." evidence="22">
    <original>C</original>
    <variation>A</variation>
    <location>
        <position position="108"/>
    </location>
</feature>
<feature type="mutagenesis site" description="Eliminates iron contents; when associated with S-118 and S-121." evidence="18">
    <original>C</original>
    <variation>S</variation>
    <location>
        <position position="108"/>
    </location>
</feature>
<feature type="mutagenesis site" description="Decreased tRNA modification." evidence="25">
    <original>H</original>
    <variation>A</variation>
    <location>
        <position position="110"/>
    </location>
</feature>
<feature type="mutagenesis site" description="Decreased tRNA modification." evidence="25">
    <original>CVYC</original>
    <variation>SVYS</variation>
    <location>
        <begin position="118"/>
        <end position="121"/>
    </location>
</feature>
<feature type="mutagenesis site" description="Dissociation of the elongator complex following assembly. Loss of elongator complex activity; when associated with A-121." evidence="22 29">
    <original>C</original>
    <variation>A</variation>
    <location>
        <position position="118"/>
    </location>
</feature>
<feature type="mutagenesis site" description="Eliminates iron contents; when associated with S-108 and S-121." evidence="18">
    <original>C</original>
    <variation>S</variation>
    <location>
        <position position="118"/>
    </location>
</feature>
<feature type="mutagenesis site" description="Decreased tRNA modification." evidence="25">
    <original>VY</original>
    <variation>AA</variation>
    <location>
        <begin position="119"/>
        <end position="120"/>
    </location>
</feature>
<feature type="mutagenesis site" description="Dissociation of the elongator complex following assembly. Loss of elongator complex activity; when associated with A-118." evidence="22 29">
    <original>C</original>
    <variation>A</variation>
    <location>
        <position position="121"/>
    </location>
</feature>
<feature type="mutagenesis site" description="Eliminates iron contents; when associated with S-108 and S-118." evidence="18">
    <original>C</original>
    <variation>S</variation>
    <location>
        <position position="121"/>
    </location>
</feature>
<feature type="mutagenesis site" description="Decreased tRNA modification." evidence="25">
    <original>Y</original>
    <variation>A</variation>
    <location>
        <position position="136"/>
    </location>
</feature>
<feature type="mutagenesis site" description="Impaired tRNA wobble uridine modification." evidence="23">
    <original>G</original>
    <variation>R</variation>
    <location>
        <position position="168"/>
    </location>
</feature>
<feature type="mutagenesis site" description="Decreased tRNA modification." evidence="25">
    <original>R</original>
    <variation>A</variation>
    <location>
        <position position="232"/>
    </location>
</feature>
<feature type="mutagenesis site" description="Abolished tRNA modification." evidence="25">
    <original>R</original>
    <variation>A</variation>
    <location>
        <position position="251"/>
    </location>
</feature>
<feature type="mutagenesis site" description="Decreased tRNA modification." evidence="25">
    <original>R</original>
    <variation>A</variation>
    <location>
        <position position="269"/>
    </location>
</feature>
<feature type="mutagenesis site" description="Decreased tRNA modification." evidence="25">
    <original>H</original>
    <variation>A</variation>
    <location>
        <position position="271"/>
    </location>
</feature>
<feature type="mutagenesis site" description="Abolished tRNA modification." evidence="25">
    <original>K</original>
    <variation>A</variation>
    <location>
        <position position="289"/>
    </location>
</feature>
<feature type="mutagenesis site" description="Abolished tRNA modification." evidence="25">
    <original>K</original>
    <variation>A</variation>
    <location>
        <position position="325"/>
    </location>
</feature>
<feature type="mutagenesis site" description="Loss of elongator complex activity." evidence="29">
    <original>Y</original>
    <variation>A</variation>
    <location>
        <position position="327"/>
    </location>
</feature>
<feature type="mutagenesis site" description="Decreased tRNA modification." evidence="25">
    <original>W</original>
    <variation>A</variation>
    <location>
        <position position="341"/>
    </location>
</feature>
<feature type="mutagenesis site" description="Abolished tRNA modification." evidence="25">
    <original>R</original>
    <variation>A</variation>
    <location>
        <position position="373"/>
    </location>
</feature>
<feature type="mutagenesis site" description="Abolished tRNA modification." evidence="25 29">
    <original>R</original>
    <variation>A</variation>
    <location>
        <position position="376"/>
    </location>
</feature>
<feature type="mutagenesis site" description="Abolished tRNA modification." evidence="25">
    <original>R</original>
    <variation>A</variation>
    <location>
        <position position="411"/>
    </location>
</feature>
<feature type="mutagenesis site" description="Does not affect interaction with KTI11 and KTI12. Loss of elongator complex activity." evidence="22 29">
    <original>Y</original>
    <variation>A</variation>
    <location>
        <position position="540"/>
    </location>
</feature>
<feature type="strand" evidence="37">
    <location>
        <begin position="97"/>
        <end position="102"/>
    </location>
</feature>
<feature type="helix" evidence="37">
    <location>
        <begin position="111"/>
        <end position="114"/>
    </location>
</feature>
<feature type="strand" evidence="37">
    <location>
        <begin position="123"/>
        <end position="129"/>
    </location>
</feature>
<feature type="helix" evidence="37">
    <location>
        <begin position="141"/>
        <end position="149"/>
    </location>
</feature>
<feature type="helix" evidence="37">
    <location>
        <begin position="153"/>
        <end position="163"/>
    </location>
</feature>
<feature type="turn" evidence="37">
    <location>
        <begin position="164"/>
        <end position="168"/>
    </location>
</feature>
<feature type="strand" evidence="37">
    <location>
        <begin position="173"/>
        <end position="181"/>
    </location>
</feature>
<feature type="helix" evidence="37">
    <location>
        <begin position="183"/>
        <end position="185"/>
    </location>
</feature>
<feature type="helix" evidence="37">
    <location>
        <begin position="188"/>
        <end position="203"/>
    </location>
</feature>
<feature type="helix" evidence="37">
    <location>
        <begin position="210"/>
        <end position="216"/>
    </location>
</feature>
<feature type="turn" evidence="37">
    <location>
        <begin position="217"/>
        <end position="219"/>
    </location>
</feature>
<feature type="strand" evidence="37">
    <location>
        <begin position="221"/>
        <end position="231"/>
    </location>
</feature>
<feature type="helix" evidence="37">
    <location>
        <begin position="238"/>
        <end position="247"/>
    </location>
</feature>
<feature type="strand" evidence="37">
    <location>
        <begin position="251"/>
        <end position="257"/>
    </location>
</feature>
<feature type="helix" evidence="37">
    <location>
        <begin position="261"/>
        <end position="266"/>
    </location>
</feature>
<feature type="helix" evidence="37">
    <location>
        <begin position="273"/>
        <end position="286"/>
    </location>
</feature>
<feature type="strand" evidence="37">
    <location>
        <begin position="289"/>
        <end position="294"/>
    </location>
</feature>
<feature type="helix" evidence="37">
    <location>
        <begin position="305"/>
        <end position="315"/>
    </location>
</feature>
<feature type="turn" evidence="37">
    <location>
        <begin position="317"/>
        <end position="319"/>
    </location>
</feature>
<feature type="strand" evidence="37">
    <location>
        <begin position="322"/>
        <end position="326"/>
    </location>
</feature>
<feature type="helix" evidence="37">
    <location>
        <begin position="338"/>
        <end position="342"/>
    </location>
</feature>
<feature type="helix" evidence="37">
    <location>
        <begin position="353"/>
        <end position="361"/>
    </location>
</feature>
<feature type="helix" evidence="37">
    <location>
        <begin position="362"/>
        <end position="364"/>
    </location>
</feature>
<feature type="strand" evidence="37">
    <location>
        <begin position="370"/>
        <end position="375"/>
    </location>
</feature>
<feature type="turn" evidence="37">
    <location>
        <begin position="380"/>
        <end position="382"/>
    </location>
</feature>
<feature type="helix" evidence="37">
    <location>
        <begin position="392"/>
        <end position="399"/>
    </location>
</feature>
<feature type="turn" evidence="37">
    <location>
        <begin position="400"/>
        <end position="403"/>
    </location>
</feature>
<feature type="turn" evidence="37">
    <location>
        <begin position="410"/>
        <end position="412"/>
    </location>
</feature>
<feature type="strand" evidence="37">
    <location>
        <begin position="430"/>
        <end position="438"/>
    </location>
</feature>
<feature type="strand" evidence="37">
    <location>
        <begin position="441"/>
        <end position="450"/>
    </location>
</feature>
<feature type="turn" evidence="37">
    <location>
        <begin position="451"/>
        <end position="454"/>
    </location>
</feature>
<feature type="strand" evidence="37">
    <location>
        <begin position="455"/>
        <end position="464"/>
    </location>
</feature>
<feature type="helix" evidence="37">
    <location>
        <begin position="473"/>
        <end position="475"/>
    </location>
</feature>
<feature type="strand" evidence="37">
    <location>
        <begin position="480"/>
        <end position="488"/>
    </location>
</feature>
<feature type="helix" evidence="37">
    <location>
        <begin position="508"/>
        <end position="522"/>
    </location>
</feature>
<feature type="strand" evidence="37">
    <location>
        <begin position="527"/>
        <end position="531"/>
    </location>
</feature>
<feature type="helix" evidence="37">
    <location>
        <begin position="538"/>
        <end position="542"/>
    </location>
</feature>
<feature type="turn" evidence="37">
    <location>
        <begin position="543"/>
        <end position="545"/>
    </location>
</feature>
<feature type="strand" evidence="37">
    <location>
        <begin position="547"/>
        <end position="549"/>
    </location>
</feature>
<feature type="strand" evidence="37">
    <location>
        <begin position="552"/>
        <end position="556"/>
    </location>
</feature>
<organism>
    <name type="scientific">Saccharomyces cerevisiae (strain ATCC 204508 / S288c)</name>
    <name type="common">Baker's yeast</name>
    <dbReference type="NCBI Taxonomy" id="559292"/>
    <lineage>
        <taxon>Eukaryota</taxon>
        <taxon>Fungi</taxon>
        <taxon>Dikarya</taxon>
        <taxon>Ascomycota</taxon>
        <taxon>Saccharomycotina</taxon>
        <taxon>Saccharomycetes</taxon>
        <taxon>Saccharomycetales</taxon>
        <taxon>Saccharomycetaceae</taxon>
        <taxon>Saccharomyces</taxon>
    </lineage>
</organism>
<accession>Q02908</accession>
<accession>D6W3T1</accession>
<name>ELP3_YEAST</name>
<evidence type="ECO:0000250" key="1">
    <source>
        <dbReference type="UniProtKB" id="A0A1C7D1B7"/>
    </source>
</evidence>
<evidence type="ECO:0000250" key="2">
    <source>
        <dbReference type="UniProtKB" id="D5VRB9"/>
    </source>
</evidence>
<evidence type="ECO:0000255" key="3">
    <source>
        <dbReference type="PROSITE-ProRule" id="PRU00532"/>
    </source>
</evidence>
<evidence type="ECO:0000255" key="4">
    <source>
        <dbReference type="PROSITE-ProRule" id="PRU01266"/>
    </source>
</evidence>
<evidence type="ECO:0000269" key="5">
    <source>
    </source>
</evidence>
<evidence type="ECO:0000269" key="6">
    <source>
    </source>
</evidence>
<evidence type="ECO:0000269" key="7">
    <source>
    </source>
</evidence>
<evidence type="ECO:0000269" key="8">
    <source>
    </source>
</evidence>
<evidence type="ECO:0000269" key="9">
    <source>
    </source>
</evidence>
<evidence type="ECO:0000269" key="10">
    <source>
    </source>
</evidence>
<evidence type="ECO:0000269" key="11">
    <source>
    </source>
</evidence>
<evidence type="ECO:0000269" key="12">
    <source>
    </source>
</evidence>
<evidence type="ECO:0000269" key="13">
    <source>
    </source>
</evidence>
<evidence type="ECO:0000269" key="14">
    <source>
    </source>
</evidence>
<evidence type="ECO:0000269" key="15">
    <source>
    </source>
</evidence>
<evidence type="ECO:0000269" key="16">
    <source>
    </source>
</evidence>
<evidence type="ECO:0000269" key="17">
    <source>
    </source>
</evidence>
<evidence type="ECO:0000269" key="18">
    <source>
    </source>
</evidence>
<evidence type="ECO:0000269" key="19">
    <source>
    </source>
</evidence>
<evidence type="ECO:0000269" key="20">
    <source>
    </source>
</evidence>
<evidence type="ECO:0000269" key="21">
    <source>
    </source>
</evidence>
<evidence type="ECO:0000269" key="22">
    <source>
    </source>
</evidence>
<evidence type="ECO:0000269" key="23">
    <source>
    </source>
</evidence>
<evidence type="ECO:0000269" key="24">
    <source>
    </source>
</evidence>
<evidence type="ECO:0000269" key="25">
    <source>
    </source>
</evidence>
<evidence type="ECO:0000269" key="26">
    <source>
    </source>
</evidence>
<evidence type="ECO:0000269" key="27">
    <source>
    </source>
</evidence>
<evidence type="ECO:0000269" key="28">
    <source>
    </source>
</evidence>
<evidence type="ECO:0000269" key="29">
    <source>
    </source>
</evidence>
<evidence type="ECO:0000303" key="30">
    <source>
    </source>
</evidence>
<evidence type="ECO:0000305" key="31"/>
<evidence type="ECO:0000305" key="32">
    <source>
    </source>
</evidence>
<evidence type="ECO:0000305" key="33">
    <source>
    </source>
</evidence>
<evidence type="ECO:0000305" key="34">
    <source>
    </source>
</evidence>
<evidence type="ECO:0000312" key="35">
    <source>
        <dbReference type="SGD" id="S000006007"/>
    </source>
</evidence>
<evidence type="ECO:0007744" key="36">
    <source>
        <dbReference type="PDB" id="6QK7"/>
    </source>
</evidence>
<evidence type="ECO:0007829" key="37">
    <source>
        <dbReference type="PDB" id="6QK7"/>
    </source>
</evidence>
<sequence>MARHGKGPKTNKKKLAPEKERFIQCCADITLELTDSLTSGTTREINLNGLITKYSKKYKLKQQPRLTDIINSIPDQYKKYLLPKLKAKPVRTASGIAVVAVMCKPHRCPHIAYTGNICVYCPGGPDSDFEYSTQSYTGYEPTSMRAIRARYDPYEQARGRVEQLKQLGHSIDKVEYVLMGGTFMSLPKEYREDFIVKLHNALSGFNGNDIDEAILYSQQSLTKCVGITIETRPDYCTQTHLDDMLKYGCTRLEIGVQSLYEDVARDTNRGHTVRSVCETFAVSKDAGYKVVSHMMPDLPNVGMERDIEQFKEYFENPDFRTDGLKIYPTLVIRGTGLYELWKTGRYKSYSANALVDLVARILALVPPWTRIYRVQRDIPMPLVTSGVDNGNLRELALARMKDLGTTCRDVRTREVGIQEVHHKVQPDQVELIRRDYYANGGWETFLSYEDPKKDILIGLLRLRKASKKYTYRKEFTSQRTSIVRELHVYGSVVPLHSRDPRKFQHQGFGTLLMEEAERIAKEEHGSEKISVISGVGVRNYYGKLGYELDGPYMSKRI</sequence>
<comment type="function">
    <text evidence="2 7 12 15 17 19 21 23">Catalytic tRNA acetyltransferase subunit of the elongator complex which is required for multiple tRNA modifications, including mcm5U (5-methoxycarbonylmethyl uridine), mcm5s2U (5-methoxycarbonylmethyl-2-thiouridine), and ncm5U (5-carbamoylmethyl uridine) (PubMed:15769872, PubMed:17018299, PubMed:18755837, PubMed:21912530, PubMed:31309145). In the elongator complex, acts as a tRNA uridine(34) acetyltransferase, which mediates formation of carboxymethyluridine in the wobble base at position 34 in tRNAs (By similarity). The complex functions as a gamma-toxin target (TOT); disruption of the complex confers resistance to Kluyveromyces lactis toxin zymocin (pGKL1 killer toxin) (PubMed:11296232). May also be involved in sensitivity to Pichia inositovora toxin (PubMed:13680368). Independently, ELP3 may be involved in polarized exocytosis (PubMed:15780940).</text>
</comment>
<comment type="catalytic activity">
    <reaction evidence="2">
        <text>uridine(34) in tRNA + acetyl-CoA + S-adenosyl-L-methionine + H2O = 5-(carboxymethyl)uridine(34) in tRNA + 5'-deoxyadenosine + L-methionine + CoA + 2 H(+)</text>
        <dbReference type="Rhea" id="RHEA:61020"/>
        <dbReference type="Rhea" id="RHEA-COMP:10407"/>
        <dbReference type="Rhea" id="RHEA-COMP:11727"/>
        <dbReference type="ChEBI" id="CHEBI:15377"/>
        <dbReference type="ChEBI" id="CHEBI:15378"/>
        <dbReference type="ChEBI" id="CHEBI:17319"/>
        <dbReference type="ChEBI" id="CHEBI:57287"/>
        <dbReference type="ChEBI" id="CHEBI:57288"/>
        <dbReference type="ChEBI" id="CHEBI:57844"/>
        <dbReference type="ChEBI" id="CHEBI:59789"/>
        <dbReference type="ChEBI" id="CHEBI:65315"/>
        <dbReference type="ChEBI" id="CHEBI:74882"/>
        <dbReference type="EC" id="2.3.1.311"/>
    </reaction>
    <physiologicalReaction direction="left-to-right" evidence="2">
        <dbReference type="Rhea" id="RHEA:61021"/>
    </physiologicalReaction>
</comment>
<comment type="cofactor">
    <cofactor evidence="18 22 29">
        <name>[4Fe-4S] cluster</name>
        <dbReference type="ChEBI" id="CHEBI:49883"/>
    </cofactor>
    <text evidence="18 22">Binds 1 [4Fe-4S] cluster (PubMed:16420352). The cluster is coordinated with 3 cysteines and an exchangeable S-adenosyl-L-methionine (PubMed:16420352). The cluster is required for structural integrity of the elongator complex, while it is not required for catalytic activity (PubMed:18986986).</text>
</comment>
<comment type="pathway">
    <text evidence="15 19 23">tRNA modification; 5-methoxycarbonylmethyl-2-thiouridine-tRNA biosynthesis.</text>
</comment>
<comment type="subunit">
    <text evidence="6 8 9 16 22 24 26 27 28 29">Component of the elongator complex which consists of ELP1/IKI3, ELP2, ELP3, ELP4, ELP5/IKI1 and ELP6 (PubMed:10445034, PubMed:11435442, PubMed:11689709, PubMed:18986986, PubMed:27872205, PubMed:27974378). The elongator complex is composed of two copies of the Elp123 subcomplex (composed of ELP1/IKI3, ELP2 and ELP3) and two copies of the Elp456 subcomplex (composed of ELP4, ELP5/IKI1 and ELP6) (PubMed:27872205, PubMed:27974378). The Elp123 subcomplex forms a two-lobed scaffold, which binds the Elp456 subcomplex asymmetrically (PubMed:25960406, PubMed:27872205, PubMed:27974378). In each lobe, ELP2 is tightly sandwiched between ELP1/IKI3 and ELP3 (PubMed:31309145). The Elp123 subcomplex binds tRNA through ELP1/IKI3 and ELP3 and can bind 2 tRNAs simultaneously (PubMed:31309145). tRNA-binding induces conformational rearrangements which precisely position the targeted anticodon base in the active site (PubMed:31309145). ELP3 interacts with KTI11/DPH3 (PubMed:18986986, PubMed:27694803). ELP3 interacts with KTI12 (PubMed:15772087). The Elp456 subcomplex binds tRNA and has ATPase activity (PubMed:22343726).</text>
</comment>
<comment type="interaction">
    <interactant intactId="EBI-33957">
        <id>Q02908</id>
    </interactant>
    <interactant intactId="EBI-23459">
        <id>P42935</id>
        <label>ELP2</label>
    </interactant>
    <organismsDiffer>false</organismsDiffer>
    <experiments>8</experiments>
</comment>
<comment type="interaction">
    <interactant intactId="EBI-33957">
        <id>Q02908</id>
    </interactant>
    <interactant intactId="EBI-27653">
        <id>Q04868</id>
        <label>ELP6</label>
    </interactant>
    <organismsDiffer>false</organismsDiffer>
    <experiments>5</experiments>
</comment>
<comment type="interaction">
    <interactant intactId="EBI-33957">
        <id>Q02908</id>
    </interactant>
    <interactant intactId="EBI-9061">
        <id>P38874</id>
        <label>IKI1</label>
    </interactant>
    <organismsDiffer>false</organismsDiffer>
    <experiments>7</experiments>
</comment>
<comment type="interaction">
    <interactant intactId="EBI-33957">
        <id>Q02908</id>
    </interactant>
    <interactant intactId="EBI-2055307">
        <id>Q3E840</id>
        <label>KTI11</label>
    </interactant>
    <organismsDiffer>false</organismsDiffer>
    <experiments>3</experiments>
</comment>
<comment type="subcellular location">
    <subcellularLocation>
        <location evidence="13 17">Cytoplasm</location>
    </subcellularLocation>
    <subcellularLocation>
        <location evidence="5">Nucleus</location>
    </subcellularLocation>
</comment>
<comment type="disruption phenotype">
    <text evidence="20 26">Sensitive to caffeine and thermal stress (PubMed:18627462). Resistance to zymocin (PubMed:18627462, PubMed:27694803).</text>
</comment>
<comment type="miscellaneous">
    <text evidence="14">Present with 4760 molecules/cell in log phase SD medium.</text>
</comment>
<comment type="similarity">
    <text evidence="31">Belongs to the ELP3 family.</text>
</comment>
<comment type="caution">
    <text evidence="6 10 19 22 23 32 33 34">The elongator complex was originally thought to play a role in transcription elongation. Was reported to display histone acetyltransferase activity and to acetylate histone H3 preferentially at 'Lys-14', and H4 preferentially at 'Lys-8' (PubMed:10445034, PubMed:11904415, PubMed:15138274). However, it was later shown that the effect on histone acetylation and chromatin regulation is indirect and that the elongator complex is primarily involved in tRNA modification (PubMed:17018299, PubMed:18986986, PubMed:21912530).</text>
</comment>
<dbReference type="EC" id="2.3.1.311" evidence="2"/>
<dbReference type="EMBL" id="U43281">
    <property type="protein sequence ID" value="AAB68213.1"/>
    <property type="molecule type" value="Genomic_DNA"/>
</dbReference>
<dbReference type="EMBL" id="BK006949">
    <property type="protein sequence ID" value="DAA11347.1"/>
    <property type="molecule type" value="Genomic_DNA"/>
</dbReference>
<dbReference type="PIR" id="S61980">
    <property type="entry name" value="S61980"/>
</dbReference>
<dbReference type="RefSeq" id="NP_015239.1">
    <property type="nucleotide sequence ID" value="NM_001183900.1"/>
</dbReference>
<dbReference type="PDB" id="6QK7">
    <property type="method" value="EM"/>
    <property type="resolution" value="3.30 A"/>
    <property type="chains" value="C=1-557"/>
</dbReference>
<dbReference type="PDB" id="8ASV">
    <property type="method" value="EM"/>
    <property type="resolution" value="4.35 A"/>
    <property type="chains" value="C=1-557"/>
</dbReference>
<dbReference type="PDB" id="8ASW">
    <property type="method" value="EM"/>
    <property type="resolution" value="3.96 A"/>
    <property type="chains" value="C=1-557"/>
</dbReference>
<dbReference type="PDBsum" id="6QK7"/>
<dbReference type="PDBsum" id="8ASV"/>
<dbReference type="PDBsum" id="8ASW"/>
<dbReference type="EMDB" id="EMD-15622"/>
<dbReference type="EMDB" id="EMD-15623"/>
<dbReference type="EMDB" id="EMD-4571"/>
<dbReference type="SMR" id="Q02908"/>
<dbReference type="BioGRID" id="36095">
    <property type="interactions" value="595"/>
</dbReference>
<dbReference type="ComplexPortal" id="CPX-779">
    <property type="entry name" value="Elongator holoenzyme complex"/>
</dbReference>
<dbReference type="DIP" id="DIP-2385N"/>
<dbReference type="FunCoup" id="Q02908">
    <property type="interactions" value="1194"/>
</dbReference>
<dbReference type="IntAct" id="Q02908">
    <property type="interactions" value="53"/>
</dbReference>
<dbReference type="MINT" id="Q02908"/>
<dbReference type="STRING" id="4932.YPL086C"/>
<dbReference type="iPTMnet" id="Q02908"/>
<dbReference type="PaxDb" id="4932-YPL086C"/>
<dbReference type="PeptideAtlas" id="Q02908"/>
<dbReference type="DNASU" id="856019"/>
<dbReference type="EnsemblFungi" id="YPL086C_mRNA">
    <property type="protein sequence ID" value="YPL086C"/>
    <property type="gene ID" value="YPL086C"/>
</dbReference>
<dbReference type="GeneID" id="856019"/>
<dbReference type="KEGG" id="sce:YPL086C"/>
<dbReference type="AGR" id="SGD:S000006007"/>
<dbReference type="SGD" id="S000006007">
    <property type="gene designation" value="ELP3"/>
</dbReference>
<dbReference type="VEuPathDB" id="FungiDB:YPL086C"/>
<dbReference type="eggNOG" id="KOG2535">
    <property type="taxonomic scope" value="Eukaryota"/>
</dbReference>
<dbReference type="GeneTree" id="ENSGT00390000013141"/>
<dbReference type="HOGENOM" id="CLU_025983_2_1_1"/>
<dbReference type="InParanoid" id="Q02908"/>
<dbReference type="OMA" id="TFETRPD"/>
<dbReference type="OrthoDB" id="10265243at2759"/>
<dbReference type="BioCyc" id="MetaCyc:G3O-33992-MONOMER"/>
<dbReference type="BioCyc" id="YEAST:G3O-33992-MONOMER"/>
<dbReference type="UniPathway" id="UPA00988"/>
<dbReference type="BioGRID-ORCS" id="856019">
    <property type="hits" value="8 hits in 10 CRISPR screens"/>
</dbReference>
<dbReference type="PRO" id="PR:Q02908"/>
<dbReference type="Proteomes" id="UP000002311">
    <property type="component" value="Chromosome XVI"/>
</dbReference>
<dbReference type="RNAct" id="Q02908">
    <property type="molecule type" value="protein"/>
</dbReference>
<dbReference type="GO" id="GO:0005737">
    <property type="term" value="C:cytoplasm"/>
    <property type="evidence" value="ECO:0000314"/>
    <property type="project" value="SGD"/>
</dbReference>
<dbReference type="GO" id="GO:0033588">
    <property type="term" value="C:elongator holoenzyme complex"/>
    <property type="evidence" value="ECO:0000314"/>
    <property type="project" value="UniProtKB"/>
</dbReference>
<dbReference type="GO" id="GO:0005654">
    <property type="term" value="C:nucleoplasm"/>
    <property type="evidence" value="ECO:0000304"/>
    <property type="project" value="Reactome"/>
</dbReference>
<dbReference type="GO" id="GO:0005634">
    <property type="term" value="C:nucleus"/>
    <property type="evidence" value="ECO:0000314"/>
    <property type="project" value="SGD"/>
</dbReference>
<dbReference type="GO" id="GO:0051539">
    <property type="term" value="F:4 iron, 4 sulfur cluster binding"/>
    <property type="evidence" value="ECO:0007669"/>
    <property type="project" value="UniProtKB-KW"/>
</dbReference>
<dbReference type="GO" id="GO:0046872">
    <property type="term" value="F:metal ion binding"/>
    <property type="evidence" value="ECO:0007669"/>
    <property type="project" value="UniProtKB-KW"/>
</dbReference>
<dbReference type="GO" id="GO:0000049">
    <property type="term" value="F:tRNA binding"/>
    <property type="evidence" value="ECO:0007669"/>
    <property type="project" value="UniProtKB-KW"/>
</dbReference>
<dbReference type="GO" id="GO:0106261">
    <property type="term" value="F:tRNA uridine(34) acetyltransferase activity"/>
    <property type="evidence" value="ECO:0000250"/>
    <property type="project" value="UniProtKB"/>
</dbReference>
<dbReference type="GO" id="GO:0006417">
    <property type="term" value="P:regulation of translation"/>
    <property type="evidence" value="ECO:0000303"/>
    <property type="project" value="ComplexPortal"/>
</dbReference>
<dbReference type="GO" id="GO:0002926">
    <property type="term" value="P:tRNA wobble base 5-methoxycarbonylmethyl-2-thiouridinylation"/>
    <property type="evidence" value="ECO:0000314"/>
    <property type="project" value="UniProtKB"/>
</dbReference>
<dbReference type="GO" id="GO:0002098">
    <property type="term" value="P:tRNA wobble uridine modification"/>
    <property type="evidence" value="ECO:0000314"/>
    <property type="project" value="UniProtKB"/>
</dbReference>
<dbReference type="CDD" id="cd01335">
    <property type="entry name" value="Radical_SAM"/>
    <property type="match status" value="1"/>
</dbReference>
<dbReference type="FunFam" id="3.40.630.30:FF:000003">
    <property type="entry name" value="Elongator complex protein 3"/>
    <property type="match status" value="1"/>
</dbReference>
<dbReference type="Gene3D" id="3.40.630.30">
    <property type="match status" value="1"/>
</dbReference>
<dbReference type="InterPro" id="IPR016181">
    <property type="entry name" value="Acyl_CoA_acyltransferase"/>
</dbReference>
<dbReference type="InterPro" id="IPR039661">
    <property type="entry name" value="ELP3"/>
</dbReference>
<dbReference type="InterPro" id="IPR034687">
    <property type="entry name" value="ELP3-like"/>
</dbReference>
<dbReference type="InterPro" id="IPR056591">
    <property type="entry name" value="ELP3-like_N"/>
</dbReference>
<dbReference type="InterPro" id="IPR006638">
    <property type="entry name" value="Elp3/MiaA/NifB-like_rSAM"/>
</dbReference>
<dbReference type="InterPro" id="IPR000182">
    <property type="entry name" value="GNAT_dom"/>
</dbReference>
<dbReference type="InterPro" id="IPR032432">
    <property type="entry name" value="Radical_SAM_C"/>
</dbReference>
<dbReference type="InterPro" id="IPR007197">
    <property type="entry name" value="rSAM"/>
</dbReference>
<dbReference type="NCBIfam" id="TIGR01211">
    <property type="entry name" value="ELP3"/>
    <property type="match status" value="1"/>
</dbReference>
<dbReference type="PANTHER" id="PTHR11135:SF0">
    <property type="entry name" value="ELONGATOR COMPLEX PROTEIN 3"/>
    <property type="match status" value="1"/>
</dbReference>
<dbReference type="PANTHER" id="PTHR11135">
    <property type="entry name" value="HISTONE ACETYLTRANSFERASE-RELATED"/>
    <property type="match status" value="1"/>
</dbReference>
<dbReference type="Pfam" id="PF00583">
    <property type="entry name" value="Acetyltransf_1"/>
    <property type="match status" value="1"/>
</dbReference>
<dbReference type="Pfam" id="PF23613">
    <property type="entry name" value="ELP3_N"/>
    <property type="match status" value="1"/>
</dbReference>
<dbReference type="Pfam" id="PF04055">
    <property type="entry name" value="Radical_SAM"/>
    <property type="match status" value="1"/>
</dbReference>
<dbReference type="Pfam" id="PF16199">
    <property type="entry name" value="Radical_SAM_C"/>
    <property type="match status" value="1"/>
</dbReference>
<dbReference type="PIRSF" id="PIRSF005669">
    <property type="entry name" value="Hist_AcTrfase_ELP3"/>
    <property type="match status" value="1"/>
</dbReference>
<dbReference type="SFLD" id="SFLDG01086">
    <property type="entry name" value="elongater_protein-like"/>
    <property type="match status" value="1"/>
</dbReference>
<dbReference type="SFLD" id="SFLDF00344">
    <property type="entry name" value="ELP3-like"/>
    <property type="match status" value="1"/>
</dbReference>
<dbReference type="SMART" id="SM00729">
    <property type="entry name" value="Elp3"/>
    <property type="match status" value="1"/>
</dbReference>
<dbReference type="SUPFAM" id="SSF55729">
    <property type="entry name" value="Acyl-CoA N-acyltransferases (Nat)"/>
    <property type="match status" value="1"/>
</dbReference>
<dbReference type="SUPFAM" id="SSF102114">
    <property type="entry name" value="Radical SAM enzymes"/>
    <property type="match status" value="1"/>
</dbReference>
<dbReference type="PROSITE" id="PS51186">
    <property type="entry name" value="GNAT"/>
    <property type="match status" value="1"/>
</dbReference>
<dbReference type="PROSITE" id="PS51918">
    <property type="entry name" value="RADICAL_SAM"/>
    <property type="match status" value="1"/>
</dbReference>
<proteinExistence type="evidence at protein level"/>
<gene>
    <name evidence="30 35" type="primary">ELP3</name>
    <name type="synonym">HPA1</name>
    <name type="synonym">TOT3</name>
    <name type="ordered locus">YPL086C</name>
</gene>
<protein>
    <recommendedName>
        <fullName evidence="31">Elongator complex protein 3</fullName>
        <ecNumber evidence="2">2.3.1.311</ecNumber>
    </recommendedName>
    <alternativeName>
        <fullName>Gamma-toxin target 3</fullName>
    </alternativeName>
    <alternativeName>
        <fullName evidence="31">tRNA uridine(34) acetyltransferase</fullName>
    </alternativeName>
</protein>
<reference key="1">
    <citation type="journal article" date="1997" name="Nature">
        <title>The nucleotide sequence of Saccharomyces cerevisiae chromosome XVI.</title>
        <authorList>
            <person name="Bussey H."/>
            <person name="Storms R.K."/>
            <person name="Ahmed A."/>
            <person name="Albermann K."/>
            <person name="Allen E."/>
            <person name="Ansorge W."/>
            <person name="Araujo R."/>
            <person name="Aparicio A."/>
            <person name="Barrell B.G."/>
            <person name="Badcock K."/>
            <person name="Benes V."/>
            <person name="Botstein D."/>
            <person name="Bowman S."/>
            <person name="Brueckner M."/>
            <person name="Carpenter J."/>
            <person name="Cherry J.M."/>
            <person name="Chung E."/>
            <person name="Churcher C.M."/>
            <person name="Coster F."/>
            <person name="Davis K."/>
            <person name="Davis R.W."/>
            <person name="Dietrich F.S."/>
            <person name="Delius H."/>
            <person name="DiPaolo T."/>
            <person name="Dubois E."/>
            <person name="Duesterhoeft A."/>
            <person name="Duncan M."/>
            <person name="Floeth M."/>
            <person name="Fortin N."/>
            <person name="Friesen J.D."/>
            <person name="Fritz C."/>
            <person name="Goffeau A."/>
            <person name="Hall J."/>
            <person name="Hebling U."/>
            <person name="Heumann K."/>
            <person name="Hilbert H."/>
            <person name="Hillier L.W."/>
            <person name="Hunicke-Smith S."/>
            <person name="Hyman R.W."/>
            <person name="Johnston M."/>
            <person name="Kalman S."/>
            <person name="Kleine K."/>
            <person name="Komp C."/>
            <person name="Kurdi O."/>
            <person name="Lashkari D."/>
            <person name="Lew H."/>
            <person name="Lin A."/>
            <person name="Lin D."/>
            <person name="Louis E.J."/>
            <person name="Marathe R."/>
            <person name="Messenguy F."/>
            <person name="Mewes H.-W."/>
            <person name="Mirtipati S."/>
            <person name="Moestl D."/>
            <person name="Mueller-Auer S."/>
            <person name="Namath A."/>
            <person name="Nentwich U."/>
            <person name="Oefner P."/>
            <person name="Pearson D."/>
            <person name="Petel F.X."/>
            <person name="Pohl T.M."/>
            <person name="Purnelle B."/>
            <person name="Rajandream M.A."/>
            <person name="Rechmann S."/>
            <person name="Rieger M."/>
            <person name="Riles L."/>
            <person name="Roberts D."/>
            <person name="Schaefer M."/>
            <person name="Scharfe M."/>
            <person name="Scherens B."/>
            <person name="Schramm S."/>
            <person name="Schroeder M."/>
            <person name="Sdicu A.-M."/>
            <person name="Tettelin H."/>
            <person name="Urrestarazu L.A."/>
            <person name="Ushinsky S."/>
            <person name="Vierendeels F."/>
            <person name="Vissers S."/>
            <person name="Voss H."/>
            <person name="Walsh S.V."/>
            <person name="Wambutt R."/>
            <person name="Wang Y."/>
            <person name="Wedler E."/>
            <person name="Wedler H."/>
            <person name="Winnett E."/>
            <person name="Zhong W.-W."/>
            <person name="Zollner A."/>
            <person name="Vo D.H."/>
            <person name="Hani J."/>
        </authorList>
    </citation>
    <scope>NUCLEOTIDE SEQUENCE [LARGE SCALE GENOMIC DNA]</scope>
    <source>
        <strain>ATCC 204508 / S288c</strain>
    </source>
</reference>
<reference key="2">
    <citation type="journal article" date="2014" name="G3 (Bethesda)">
        <title>The reference genome sequence of Saccharomyces cerevisiae: Then and now.</title>
        <authorList>
            <person name="Engel S.R."/>
            <person name="Dietrich F.S."/>
            <person name="Fisk D.G."/>
            <person name="Binkley G."/>
            <person name="Balakrishnan R."/>
            <person name="Costanzo M.C."/>
            <person name="Dwight S.S."/>
            <person name="Hitz B.C."/>
            <person name="Karra K."/>
            <person name="Nash R.S."/>
            <person name="Weng S."/>
            <person name="Wong E.D."/>
            <person name="Lloyd P."/>
            <person name="Skrzypek M.S."/>
            <person name="Miyasato S.R."/>
            <person name="Simison M."/>
            <person name="Cherry J.M."/>
        </authorList>
    </citation>
    <scope>GENOME REANNOTATION</scope>
    <source>
        <strain>ATCC 204508 / S288c</strain>
    </source>
</reference>
<reference key="3">
    <citation type="journal article" date="1999" name="Mol. Cell">
        <title>Elongator, a multisubunit component of a novel RNA polymerase II holoenzyme for transcriptional elongation.</title>
        <authorList>
            <person name="Otero G."/>
            <person name="Fellows J."/>
            <person name="Li Y."/>
            <person name="de Bizemont T."/>
            <person name="Dirac A.M."/>
            <person name="Gustafsson C.M."/>
            <person name="Erdjument-Bromage H."/>
            <person name="Tempst P."/>
            <person name="Svejstrup J.Q."/>
        </authorList>
    </citation>
    <scope>SUBCELLULAR LOCATION</scope>
</reference>
<reference key="4">
    <citation type="journal article" date="2001" name="EMBO J.">
        <title>Saccharomyces cerevisiae Elongator mutations confer resistance to the Kluyveromyces lactis zymocin.</title>
        <authorList>
            <person name="Frohloff F."/>
            <person name="Fichtner L."/>
            <person name="Jablonowski D."/>
            <person name="Breunig K.D."/>
            <person name="Schaffrath R."/>
        </authorList>
    </citation>
    <scope>FUNCTION OF THE ELONGATOR COMPLEX IN ZYMOCIN SENSITIVITY</scope>
</reference>
<reference key="5">
    <citation type="journal article" date="1999" name="Mol. Cell">
        <title>A novel histone acetyltransferase is an integral subunit of elongating RNA polymerase II holoenzyme.</title>
        <authorList>
            <person name="Wittschieben B.O."/>
            <person name="Otero G."/>
            <person name="de Bizemont T."/>
            <person name="Fellows J."/>
            <person name="Erdjument-Bromage H."/>
            <person name="Ohba R."/>
            <person name="Li Y."/>
            <person name="Allis C.D."/>
            <person name="Tempst P."/>
            <person name="Svejstrup J.Q."/>
        </authorList>
    </citation>
    <scope>IDENTIFICATION IN THE ELONGATOR COMPLEX</scope>
</reference>
<reference key="6">
    <citation type="journal article" date="2001" name="J. Biol. Chem.">
        <title>RNA polymerase II elongator holoenzyme is composed of two discrete subcomplexes.</title>
        <authorList>
            <person name="Winkler G.S."/>
            <person name="Petrakis T.G."/>
            <person name="Ethelberg S."/>
            <person name="Tokunaga M."/>
            <person name="Erdjument-Bromage H."/>
            <person name="Tempst P."/>
            <person name="Svejstrup J.Q."/>
        </authorList>
    </citation>
    <scope>IDENTIFICATION IN THE ELONGATOR COMPLEX</scope>
</reference>
<reference key="7">
    <citation type="journal article" date="2001" name="Mol. Cell. Biol.">
        <title>Characterization of a six-subunit holo-elongator complex required for the regulated expression of a group of genes in Saccharomyces cerevisiae.</title>
        <authorList>
            <person name="Krogan N.J."/>
            <person name="Greenblatt J.F."/>
        </authorList>
    </citation>
    <scope>IDENTIFICATION IN THE ELONGATOR COMPLEX</scope>
</reference>
<reference key="8">
    <citation type="journal article" date="2002" name="Proc. Natl. Acad. Sci. U.S.A.">
        <title>Elongator is a histone H3 and H4 acetyltransferase important for normal histone acetylation levels in vivo.</title>
        <authorList>
            <person name="Winkler G.S."/>
            <person name="Kristjuhan A."/>
            <person name="Erdjument-Bromage H."/>
            <person name="Tempst P."/>
            <person name="Svejstrup J.Q."/>
        </authorList>
    </citation>
    <scope>DISPUTED FUNCTION IN HISTONE ACETYLATION</scope>
</reference>
<reference key="9">
    <citation type="journal article" date="2003" name="Mol. Genet. Genomics">
        <title>Structural and functional analysis of the killer element pPin1-3 from Pichia inositovora.</title>
        <authorList>
            <person name="Klassen R."/>
            <person name="Meinhardt F."/>
        </authorList>
    </citation>
    <scope>FUNCTION OF THE ELONGATOR COMPLEX IN PICHIA INOSITOVORA TOXIN SENSITIVITY</scope>
</reference>
<reference key="10">
    <citation type="journal article" date="2003" name="Nat. Biotechnol.">
        <title>A proteomics approach to understanding protein ubiquitination.</title>
        <authorList>
            <person name="Peng J."/>
            <person name="Schwartz D."/>
            <person name="Elias J.E."/>
            <person name="Thoreen C.C."/>
            <person name="Cheng D."/>
            <person name="Marsischky G."/>
            <person name="Roelofs J."/>
            <person name="Finley D."/>
            <person name="Gygi S.P."/>
        </authorList>
    </citation>
    <scope>UBIQUITINATION [LARGE SCALE ANALYSIS] AT LYS-453</scope>
    <scope>IDENTIFICATION BY MASS SPECTROMETRY</scope>
    <source>
        <strain>SUB592</strain>
    </source>
</reference>
<reference key="11">
    <citation type="journal article" date="2003" name="Nature">
        <title>Global analysis of protein localization in budding yeast.</title>
        <authorList>
            <person name="Huh W.-K."/>
            <person name="Falvo J.V."/>
            <person name="Gerke L.C."/>
            <person name="Carroll A.S."/>
            <person name="Howson R.W."/>
            <person name="Weissman J.S."/>
            <person name="O'Shea E.K."/>
        </authorList>
    </citation>
    <scope>SUBCELLULAR LOCATION [LARGE SCALE ANALYSIS]</scope>
</reference>
<reference key="12">
    <citation type="journal article" date="2003" name="Nature">
        <title>Global analysis of protein expression in yeast.</title>
        <authorList>
            <person name="Ghaemmaghami S."/>
            <person name="Huh W.-K."/>
            <person name="Bower K."/>
            <person name="Howson R.W."/>
            <person name="Belle A."/>
            <person name="Dephoure N."/>
            <person name="O'Shea E.K."/>
            <person name="Weissman J.S."/>
        </authorList>
    </citation>
    <scope>LEVEL OF PROTEIN EXPRESSION [LARGE SCALE ANALYSIS]</scope>
</reference>
<reference key="13">
    <citation type="journal article" date="2004" name="J. Biol. Chem.">
        <title>Molecular architecture, structure-function relationship, and importance of the Elp3 subunit for the RNA binding of holo-elongator.</title>
        <authorList>
            <person name="Petrakis T.G."/>
            <person name="Wittschieben B.O."/>
            <person name="Svejstrup J.Q."/>
        </authorList>
    </citation>
    <scope>DISPUTED FUNCTION IN HISTONE ACETYLATION</scope>
</reference>
<reference key="14">
    <citation type="journal article" date="2005" name="J. Biol. Chem.">
        <title>Physical and functional interaction between Elongator and the chromatin-associated Kti12 protein.</title>
        <authorList>
            <person name="Petrakis T.G."/>
            <person name="Soegaard T.M.M."/>
            <person name="Erdjument-Bromage H."/>
            <person name="Tempst P."/>
            <person name="Svejstrup J.Q."/>
        </authorList>
    </citation>
    <scope>INTERACTION WITH KTI12</scope>
</reference>
<reference key="15">
    <citation type="journal article" date="2005" name="Mol. Cell">
        <title>Elp1p, the yeast homolog of the FD disease syndrome protein, negatively regulates exocytosis independently of transcriptional elongation.</title>
        <authorList>
            <person name="Rahl P.B."/>
            <person name="Chen C.Z."/>
            <person name="Collins R.N."/>
        </authorList>
    </citation>
    <scope>FUNCTION IN EXOCYTOSIS REGULATION</scope>
    <scope>SUBCELLULAR LOCATION</scope>
</reference>
<reference key="16">
    <citation type="journal article" date="2005" name="RNA">
        <title>An early step in wobble uridine tRNA modification requires the Elongator complex.</title>
        <authorList>
            <person name="Huang B."/>
            <person name="Johansson M.J.O."/>
            <person name="Bystroem A.S."/>
        </authorList>
    </citation>
    <scope>FUNCTION IN TRNA MODIFICATION</scope>
</reference>
<reference key="17">
    <citation type="journal article" date="2006" name="Mol. Cell">
        <title>Elevated levels of two tRNA species bypass the requirement for elongator complex in transcription and exocytosis.</title>
        <authorList>
            <person name="Esberg A."/>
            <person name="Huang B."/>
            <person name="Johansson M.J."/>
            <person name="Bystroem A.S."/>
        </authorList>
    </citation>
    <scope>FUNCTION</scope>
    <scope>PATHWAY</scope>
</reference>
<reference key="18">
    <citation type="journal article" date="2006" name="Mol. Microbiol.">
        <title>The Elongator subunit Elp3 contains a Fe4S4 cluster and binds S-adenosylmethionine.</title>
        <authorList>
            <person name="Paraskevopoulou C."/>
            <person name="Fairhurst S.A."/>
            <person name="Lowe D.J."/>
            <person name="Brick P."/>
            <person name="Onesti S."/>
        </authorList>
    </citation>
    <scope>COFACTOR</scope>
    <scope>S-ADENOSYLMETHIONINE-BINDING</scope>
    <scope>PRESENCE OF IRON-SULFUR (4FE-4S) CLUSTER</scope>
    <scope>MUTAGENESIS OF CYS-108; CYS-118 AND CYS-121</scope>
</reference>
<reference key="19">
    <citation type="journal article" date="2008" name="Mol. Microbiol.">
        <title>A versatile partner of eukaryotic protein complexes that is involved in multiple biological processes: Kti11/Dph3.</title>
        <authorList>
            <person name="Baer C."/>
            <person name="Zabel R."/>
            <person name="Liu S."/>
            <person name="Stark M.J."/>
            <person name="Schaffrath R."/>
        </authorList>
    </citation>
    <scope>DISRUPTION PHENOTYPE</scope>
</reference>
<reference key="20">
    <citation type="journal article" date="2008" name="RNA">
        <title>A genome-wide screen identifies genes required for formation of the wobble nucleoside 5-methoxycarbonylmethyl-2-thiouridine in Saccharomyces cerevisiae.</title>
        <authorList>
            <person name="Huang B."/>
            <person name="Lu J."/>
            <person name="Bystroem A.S."/>
        </authorList>
    </citation>
    <scope>FUNCTION</scope>
</reference>
<reference key="21">
    <citation type="journal article" date="2009" name="J. Biol. Chem.">
        <title>An iron-sulfur cluster domain in Elp3 important for the structural integrity of elongator.</title>
        <authorList>
            <person name="Greenwood C."/>
            <person name="Selth L.A."/>
            <person name="Dirac-Svejstrup A.B."/>
            <person name="Svejstrup J.Q."/>
        </authorList>
    </citation>
    <scope>COFACTOR</scope>
    <scope>IDENTIFICATION IN THE ELONGATOR COMPLEX</scope>
    <scope>INTERACTION WITH KTI11 AND KTI12</scope>
    <scope>MUTAGENESIS OF CYS-103; CYS-108; CYS-118; CYS-121 AND TYR-540</scope>
</reference>
<reference key="22">
    <citation type="journal article" date="2011" name="PLoS Genet.">
        <title>Elongator complex influences telomeric gene silencing and DNA damage response by its role in wobble uridine tRNA modification.</title>
        <authorList>
            <person name="Chen C."/>
            <person name="Huang B."/>
            <person name="Eliasson M."/>
            <person name="Ryden P."/>
            <person name="Bystroem A.S."/>
        </authorList>
    </citation>
    <scope>FUNCTION</scope>
    <scope>PATHWAY</scope>
    <scope>MUTAGENESIS OF CYS-103 AND GLY-168</scope>
</reference>
<reference key="23">
    <citation type="journal article" date="2012" name="Nat. Struct. Mol. Biol.">
        <title>The Elongator subcomplex Elp456 is a hexameric RecA-like ATPase.</title>
        <authorList>
            <person name="Glatt S."/>
            <person name="Letoquart J."/>
            <person name="Faux C."/>
            <person name="Taylor N.M."/>
            <person name="Seraphin B."/>
            <person name="Muller C.W."/>
        </authorList>
    </citation>
    <scope>SUBUNIT</scope>
</reference>
<reference key="24">
    <citation type="journal article" date="2015" name="Structure">
        <title>The Elp2 subunit is essential for elongator complex assembly and functional regulation.</title>
        <authorList>
            <person name="Dong C."/>
            <person name="Lin Z."/>
            <person name="Diao W."/>
            <person name="Li D."/>
            <person name="Chu X."/>
            <person name="Wang Z."/>
            <person name="Zhou H."/>
            <person name="Xie Z."/>
            <person name="Shen Y."/>
            <person name="Long J."/>
        </authorList>
    </citation>
    <scope>IDENTIFICATION IN THE ELONGATOR ELP123 SUBCOMPLEX</scope>
</reference>
<reference key="25">
    <citation type="journal article" date="2016" name="Nat. Chem. Biol.">
        <title>Cbr1 is a Dph3 reductase required for the tRNA wobble uridine modification.</title>
        <authorList>
            <person name="Lin Z."/>
            <person name="Dong M."/>
            <person name="Zhang Y."/>
            <person name="Lee E.A."/>
            <person name="Lin H."/>
        </authorList>
    </citation>
    <scope>INTERACTION WITH KTI11</scope>
    <scope>IDENTIFICATION BY MASS SPECTROMETRY</scope>
    <scope>DISRUPTION PHENOTYPE</scope>
</reference>
<reference key="26">
    <citation type="journal article" date="2016" name="Nat. Struct. Mol. Biol.">
        <title>Structural basis for tRNA modification by Elp3 from Dehalococcoides mccartyi.</title>
        <authorList>
            <person name="Glatt S."/>
            <person name="Zabel R."/>
            <person name="Kolaj-Robin O."/>
            <person name="Onuma O.F."/>
            <person name="Baudin F."/>
            <person name="Graziadei A."/>
            <person name="Taverniti V."/>
            <person name="Lin T.Y."/>
            <person name="Baymann F."/>
            <person name="Seraphin B."/>
            <person name="Breunig K.D."/>
            <person name="Mueller C.W."/>
        </authorList>
    </citation>
    <scope>FUNCTION</scope>
    <scope>MUTAGENESIS OF LYS-53; LYS-56; LYS-57; LYS-59; LYS-61; ARG-65; LYS-78; LYS-79; 86-LYS--LYS-88; ARG-91; HIS-110; 118-CYS--CYS-121; 119-VAL-TYR-120; TYR-136; ARG-232; ARG-251; ARG-269; HIS-271; LYS-289; LYS-325; TRP-341; ARG-373; ARG-376 AND ARG-411</scope>
</reference>
<reference key="27">
    <citation type="journal article" date="2017" name="EMBO Rep.">
        <title>Architecture of the yeast Elongator complex.</title>
        <authorList>
            <person name="Dauden M.I."/>
            <person name="Kosinski J."/>
            <person name="Kolaj-Robin O."/>
            <person name="Desfosses A."/>
            <person name="Ori A."/>
            <person name="Faux C."/>
            <person name="Hoffmann N.A."/>
            <person name="Onuma O.F."/>
            <person name="Breunig K.D."/>
            <person name="Beck M."/>
            <person name="Sachse C."/>
            <person name="Seraphin B."/>
            <person name="Glatt S."/>
            <person name="Mueller C.W."/>
        </authorList>
    </citation>
    <scope>STRUCTURE BY ELECTRON MICROSCOPY (3.3 ANGSTROMS)</scope>
    <scope>IDENTIFICATION IN THE ELONGATOR COMPLEX</scope>
</reference>
<reference key="28">
    <citation type="journal article" date="2017" name="EMBO Rep.">
        <title>Molecular architecture of the yeast Elongator complex reveals an unexpected asymmetric subunit arrangement.</title>
        <authorList>
            <person name="Setiaputra D.T."/>
            <person name="Cheng D.T."/>
            <person name="Lu S."/>
            <person name="Hansen J.M."/>
            <person name="Dalwadi U."/>
            <person name="Lam C.H."/>
            <person name="To J.L."/>
            <person name="Dong M.Q."/>
            <person name="Yip C.K."/>
        </authorList>
    </citation>
    <scope>STRUCTURE BY ELECTRON MICROSCOPY</scope>
    <scope>IDENTIFICATION IN THE ELONGATOR COMPLEX</scope>
</reference>
<reference evidence="36" key="29">
    <citation type="journal article" date="2019" name="Sci. Adv.">
        <title>Molecular basis of tRNA recognition by the Elongator complex.</title>
        <authorList>
            <person name="Dauden M.I."/>
            <person name="Jaciuk M."/>
            <person name="Weis F."/>
            <person name="Lin T.Y."/>
            <person name="Kleindienst C."/>
            <person name="Abbassi N.E.H."/>
            <person name="Khatter H."/>
            <person name="Krutyholowa R."/>
            <person name="Breunig K.D."/>
            <person name="Kosinski J."/>
            <person name="Mueller C.W."/>
            <person name="Glatt S."/>
        </authorList>
    </citation>
    <scope>STRUCTURE BY ELECTRON MICROSCOPY (3.30 ANGSTROMS) OF THE ELONGATOR ELP123 SUBCOMPLEX</scope>
    <scope>FUNCTION</scope>
    <scope>COFACTOR</scope>
    <scope>MUTAGENESIS OF CYS-118; CYS-121; TYR-327; ARG-376 AND TYR-540</scope>
</reference>